<sequence>MLSCWVLLLALLGGACALPAPLGYSQALAQAVDSYNQRPEVQNAFRLLSADPEPGPNVQLSSLHNLNFTIMETRCQARSGAQLDSCEFKEDGLVKDCAAPVVLQGGRAVLDVTCVDSMADPVRVKRVWPLVIRTVIAGYNLYRAIKKK</sequence>
<organism>
    <name type="scientific">Gallus gallus</name>
    <name type="common">Chicken</name>
    <dbReference type="NCBI Taxonomy" id="9031"/>
    <lineage>
        <taxon>Eukaryota</taxon>
        <taxon>Metazoa</taxon>
        <taxon>Chordata</taxon>
        <taxon>Craniata</taxon>
        <taxon>Vertebrata</taxon>
        <taxon>Euteleostomi</taxon>
        <taxon>Archelosauria</taxon>
        <taxon>Archosauria</taxon>
        <taxon>Dinosauria</taxon>
        <taxon>Saurischia</taxon>
        <taxon>Theropoda</taxon>
        <taxon>Coelurosauria</taxon>
        <taxon>Aves</taxon>
        <taxon>Neognathae</taxon>
        <taxon>Galloanserae</taxon>
        <taxon>Galliformes</taxon>
        <taxon>Phasianidae</taxon>
        <taxon>Phasianinae</taxon>
        <taxon>Gallus</taxon>
    </lineage>
</organism>
<name>CTHL1_CHICK</name>
<proteinExistence type="evidence at protein level"/>
<gene>
    <name type="primary">CATHL1</name>
    <name type="synonym">CATH</name>
</gene>
<reference key="1">
    <citation type="journal article" date="2004" name="Immunogenetics">
        <title>Bioinformatic discovery and initial characterisation of nine novel antimicrobial peptide genes in the chicken.</title>
        <authorList>
            <person name="Lynn D.J."/>
            <person name="Higgs R."/>
            <person name="Gaines S."/>
            <person name="Tierney J."/>
            <person name="James T."/>
            <person name="Lloyd A.T."/>
            <person name="Fares M.A."/>
            <person name="Mulcahy G."/>
            <person name="O'Farrelly C."/>
        </authorList>
    </citation>
    <scope>NUCLEOTIDE SEQUENCE [MRNA]</scope>
    <scope>TISSUE SPECIFICITY</scope>
    <source>
        <tissue>Liver</tissue>
    </source>
</reference>
<reference key="2">
    <citation type="journal article" date="2006" name="J. Biol. Chem.">
        <title>Identification and functional characterization of three chicken cathelicidins with potent antimicrobial activity.</title>
        <authorList>
            <person name="Xiao Y."/>
            <person name="Cai Y."/>
            <person name="Bommineni Y.R."/>
            <person name="Fernando S.C."/>
            <person name="Prakash O."/>
            <person name="Gilliland S.E."/>
            <person name="Zhang G."/>
        </authorList>
    </citation>
    <scope>NUCLEOTIDE SEQUENCE [GENOMIC DNA / MRNA]</scope>
    <scope>FUNCTION</scope>
</reference>
<reference key="3">
    <citation type="journal article" date="2007" name="Proc. Natl. Acad. Sci. U.S.A.">
        <title>Chicken cathelicidin-B1, an antimicrobial guardian at the mucosal M cell gateway.</title>
        <authorList>
            <person name="Goitsuka R."/>
            <person name="Chen C.-I.H."/>
            <person name="Benyon L."/>
            <person name="Asano Y."/>
            <person name="Kitamura D."/>
            <person name="Cooper M.D."/>
        </authorList>
    </citation>
    <scope>NUCLEOTIDE SEQUENCE [GENOMIC DNA]</scope>
    <scope>TISSUE SPECIFICITY</scope>
    <source>
        <tissue>Bursa of Fabricius</tissue>
    </source>
</reference>
<reference key="4">
    <citation type="journal article" date="2006" name="FEBS J.">
        <title>Structure-activity relationships of fowlicidin-1, a cathelicidin antimicrobial peptide in chicken.</title>
        <authorList>
            <person name="Xiao Y."/>
            <person name="Dai H."/>
            <person name="Bommineni Y.R."/>
            <person name="Soulages J.L."/>
            <person name="Gong Y.X."/>
            <person name="Prakash O."/>
            <person name="Zhang G."/>
        </authorList>
    </citation>
    <scope>STRUCTURE BY NMR OF 123-148</scope>
    <scope>FUNCTION</scope>
</reference>
<keyword id="KW-0002">3D-structure</keyword>
<keyword id="KW-0044">Antibiotic</keyword>
<keyword id="KW-0929">Antimicrobial</keyword>
<keyword id="KW-1015">Disulfide bond</keyword>
<keyword id="KW-0391">Immunity</keyword>
<keyword id="KW-0399">Innate immunity</keyword>
<keyword id="KW-1185">Reference proteome</keyword>
<keyword id="KW-0964">Secreted</keyword>
<keyword id="KW-0732">Signal</keyword>
<protein>
    <recommendedName>
        <fullName>Cathelicidin-1</fullName>
        <shortName>CATH-1</shortName>
    </recommendedName>
    <alternativeName>
        <fullName>Fowlicidin-1</fullName>
    </alternativeName>
</protein>
<feature type="signal peptide" evidence="2">
    <location>
        <begin position="1"/>
        <end position="17"/>
    </location>
</feature>
<feature type="propeptide" id="PRO_0000333220" evidence="2">
    <location>
        <begin position="18"/>
        <end position="122"/>
    </location>
</feature>
<feature type="peptide" id="PRO_0000333221" description="Cathelicidin-1">
    <location>
        <begin position="123"/>
        <end position="148"/>
    </location>
</feature>
<feature type="disulfide bond" evidence="1">
    <location>
        <begin position="75"/>
        <end position="86"/>
    </location>
</feature>
<feature type="disulfide bond" evidence="1">
    <location>
        <begin position="97"/>
        <end position="114"/>
    </location>
</feature>
<feature type="sequence conflict" description="In Ref. 2; AAZ65841." evidence="7" ref="2">
    <original>A</original>
    <variation>G</variation>
    <location>
        <position position="10"/>
    </location>
</feature>
<feature type="helix" evidence="8">
    <location>
        <begin position="131"/>
        <end position="139"/>
    </location>
</feature>
<feature type="strand" evidence="8">
    <location>
        <begin position="140"/>
        <end position="142"/>
    </location>
</feature>
<feature type="helix" evidence="8">
    <location>
        <begin position="143"/>
        <end position="146"/>
    </location>
</feature>
<comment type="function">
    <text evidence="4 5">Binds bacterial lipopolysaccharide (LPS). Has potent antimicrobial activity against Gram-positive and Gram-negative bacteria (in vitro). Has hemolytic activity (in vitro). May play a role in the innate immune response.</text>
</comment>
<comment type="subcellular location">
    <subcellularLocation>
        <location evidence="7">Secreted</location>
    </subcellularLocation>
</comment>
<comment type="tissue specificity">
    <text evidence="3 6">Detected in gizzard, liver, small intestine, large intestine, cloaca, bursa of Fabricius, gall bladder, lung, trachea, kidney, testis and bone marrow.</text>
</comment>
<comment type="similarity">
    <text evidence="7">Belongs to the cathelicidin family.</text>
</comment>
<evidence type="ECO:0000250" key="1"/>
<evidence type="ECO:0000255" key="2"/>
<evidence type="ECO:0000269" key="3">
    <source>
    </source>
</evidence>
<evidence type="ECO:0000269" key="4">
    <source>
    </source>
</evidence>
<evidence type="ECO:0000269" key="5">
    <source>
    </source>
</evidence>
<evidence type="ECO:0000269" key="6">
    <source>
    </source>
</evidence>
<evidence type="ECO:0000305" key="7"/>
<evidence type="ECO:0007829" key="8">
    <source>
        <dbReference type="PDB" id="2AMN"/>
    </source>
</evidence>
<dbReference type="EMBL" id="AY534900">
    <property type="protein sequence ID" value="AAS99323.1"/>
    <property type="molecule type" value="mRNA"/>
</dbReference>
<dbReference type="EMBL" id="DQ092351">
    <property type="protein sequence ID" value="AAZ42399.1"/>
    <property type="molecule type" value="mRNA"/>
</dbReference>
<dbReference type="EMBL" id="DQ092350">
    <property type="protein sequence ID" value="AAZ65841.1"/>
    <property type="molecule type" value="Genomic_DNA"/>
</dbReference>
<dbReference type="EMBL" id="AB308318">
    <property type="protein sequence ID" value="BAF75952.1"/>
    <property type="molecule type" value="Genomic_DNA"/>
</dbReference>
<dbReference type="RefSeq" id="NP_001001605.1">
    <property type="nucleotide sequence ID" value="NM_001001605.3"/>
</dbReference>
<dbReference type="PDB" id="2AMN">
    <property type="method" value="NMR"/>
    <property type="chains" value="A=123-148"/>
</dbReference>
<dbReference type="PDBsum" id="2AMN"/>
<dbReference type="BMRB" id="Q6QLQ5"/>
<dbReference type="SMR" id="Q6QLQ5"/>
<dbReference type="FunCoup" id="Q6QLQ5">
    <property type="interactions" value="71"/>
</dbReference>
<dbReference type="STRING" id="9031.ENSGALP00000042184"/>
<dbReference type="PaxDb" id="9031-ENSGALP00000042184"/>
<dbReference type="Ensembl" id="ENSGALT00010063250.1">
    <property type="protein sequence ID" value="ENSGALP00010039049.1"/>
    <property type="gene ID" value="ENSGALG00010025943.1"/>
</dbReference>
<dbReference type="GeneID" id="414337"/>
<dbReference type="KEGG" id="gga:414337"/>
<dbReference type="CTD" id="414337"/>
<dbReference type="VEuPathDB" id="HostDB:geneid_414337"/>
<dbReference type="eggNOG" id="ENOG502SAES">
    <property type="taxonomic scope" value="Eukaryota"/>
</dbReference>
<dbReference type="GeneTree" id="ENSGT00390000000410"/>
<dbReference type="HOGENOM" id="CLU_121724_1_1_1"/>
<dbReference type="InParanoid" id="Q6QLQ5"/>
<dbReference type="OMA" id="NNFDITC"/>
<dbReference type="OrthoDB" id="9930485at2759"/>
<dbReference type="PhylomeDB" id="Q6QLQ5"/>
<dbReference type="Reactome" id="R-GGA-6798695">
    <property type="pathway name" value="Neutrophil degranulation"/>
</dbReference>
<dbReference type="Reactome" id="R-GGA-6803157">
    <property type="pathway name" value="Antimicrobial peptides"/>
</dbReference>
<dbReference type="EvolutionaryTrace" id="Q6QLQ5"/>
<dbReference type="PRO" id="PR:Q6QLQ5"/>
<dbReference type="Proteomes" id="UP000000539">
    <property type="component" value="Chromosome 2"/>
</dbReference>
<dbReference type="Bgee" id="ENSGALG00000027973">
    <property type="expression patterns" value="Expressed in granulocyte and 4 other cell types or tissues"/>
</dbReference>
<dbReference type="GO" id="GO:0005615">
    <property type="term" value="C:extracellular space"/>
    <property type="evidence" value="ECO:0000318"/>
    <property type="project" value="GO_Central"/>
</dbReference>
<dbReference type="GO" id="GO:0001530">
    <property type="term" value="F:lipopolysaccharide binding"/>
    <property type="evidence" value="ECO:0000315"/>
    <property type="project" value="AgBase"/>
</dbReference>
<dbReference type="GO" id="GO:0140367">
    <property type="term" value="P:antibacterial innate immune response"/>
    <property type="evidence" value="ECO:0000315"/>
    <property type="project" value="GO_Central"/>
</dbReference>
<dbReference type="GO" id="GO:0061844">
    <property type="term" value="P:antimicrobial humoral immune response mediated by antimicrobial peptide"/>
    <property type="evidence" value="ECO:0000315"/>
    <property type="project" value="GO_Central"/>
</dbReference>
<dbReference type="GO" id="GO:0050829">
    <property type="term" value="P:defense response to Gram-negative bacterium"/>
    <property type="evidence" value="ECO:0000318"/>
    <property type="project" value="GO_Central"/>
</dbReference>
<dbReference type="GO" id="GO:0050830">
    <property type="term" value="P:defense response to Gram-positive bacterium"/>
    <property type="evidence" value="ECO:0000318"/>
    <property type="project" value="GO_Central"/>
</dbReference>
<dbReference type="GO" id="GO:0045087">
    <property type="term" value="P:innate immune response"/>
    <property type="evidence" value="ECO:0000318"/>
    <property type="project" value="GO_Central"/>
</dbReference>
<dbReference type="GO" id="GO:0042116">
    <property type="term" value="P:macrophage activation"/>
    <property type="evidence" value="ECO:0000314"/>
    <property type="project" value="AgBase"/>
</dbReference>
<dbReference type="GO" id="GO:0002821">
    <property type="term" value="P:positive regulation of adaptive immune response"/>
    <property type="evidence" value="ECO:0000314"/>
    <property type="project" value="AgBase"/>
</dbReference>
<dbReference type="GO" id="GO:1900017">
    <property type="term" value="P:positive regulation of cytokine production involved in inflammatory response"/>
    <property type="evidence" value="ECO:0000314"/>
    <property type="project" value="AgBase"/>
</dbReference>
<dbReference type="GO" id="GO:0045348">
    <property type="term" value="P:positive regulation of MHC class II biosynthetic process"/>
    <property type="evidence" value="ECO:0000314"/>
    <property type="project" value="AgBase"/>
</dbReference>
<dbReference type="FunFam" id="3.10.450.10:FF:000003">
    <property type="entry name" value="Cathelicidin antimicrobial peptide"/>
    <property type="match status" value="1"/>
</dbReference>
<dbReference type="Gene3D" id="3.10.450.10">
    <property type="match status" value="1"/>
</dbReference>
<dbReference type="InterPro" id="IPR001894">
    <property type="entry name" value="Cathelicidin-like"/>
</dbReference>
<dbReference type="InterPro" id="IPR046350">
    <property type="entry name" value="Cystatin_sf"/>
</dbReference>
<dbReference type="PANTHER" id="PTHR10206">
    <property type="entry name" value="CATHELICIDIN"/>
    <property type="match status" value="1"/>
</dbReference>
<dbReference type="PANTHER" id="PTHR10206:SF0">
    <property type="entry name" value="CATHELICIDIN B1-RELATED"/>
    <property type="match status" value="1"/>
</dbReference>
<dbReference type="Pfam" id="PF00666">
    <property type="entry name" value="Cathelicidins"/>
    <property type="match status" value="1"/>
</dbReference>
<dbReference type="SUPFAM" id="SSF54403">
    <property type="entry name" value="Cystatin/monellin"/>
    <property type="match status" value="1"/>
</dbReference>
<accession>Q6QLQ5</accession>
<accession>Q2IAM1</accession>